<keyword id="KW-0963">Cytoplasm</keyword>
<keyword id="KW-0378">Hydrolase</keyword>
<keyword id="KW-0479">Metal-binding</keyword>
<keyword id="KW-0539">Nucleus</keyword>
<keyword id="KW-1185">Reference proteome</keyword>
<keyword id="KW-0819">tRNA processing</keyword>
<keyword id="KW-0862">Zinc</keyword>
<accession>O42912</accession>
<reference key="1">
    <citation type="journal article" date="2002" name="Nature">
        <title>The genome sequence of Schizosaccharomyces pombe.</title>
        <authorList>
            <person name="Wood V."/>
            <person name="Gwilliam R."/>
            <person name="Rajandream M.A."/>
            <person name="Lyne M.H."/>
            <person name="Lyne R."/>
            <person name="Stewart A."/>
            <person name="Sgouros J.G."/>
            <person name="Peat N."/>
            <person name="Hayles J."/>
            <person name="Baker S.G."/>
            <person name="Basham D."/>
            <person name="Bowman S."/>
            <person name="Brooks K."/>
            <person name="Brown D."/>
            <person name="Brown S."/>
            <person name="Chillingworth T."/>
            <person name="Churcher C.M."/>
            <person name="Collins M."/>
            <person name="Connor R."/>
            <person name="Cronin A."/>
            <person name="Davis P."/>
            <person name="Feltwell T."/>
            <person name="Fraser A."/>
            <person name="Gentles S."/>
            <person name="Goble A."/>
            <person name="Hamlin N."/>
            <person name="Harris D.E."/>
            <person name="Hidalgo J."/>
            <person name="Hodgson G."/>
            <person name="Holroyd S."/>
            <person name="Hornsby T."/>
            <person name="Howarth S."/>
            <person name="Huckle E.J."/>
            <person name="Hunt S."/>
            <person name="Jagels K."/>
            <person name="James K.D."/>
            <person name="Jones L."/>
            <person name="Jones M."/>
            <person name="Leather S."/>
            <person name="McDonald S."/>
            <person name="McLean J."/>
            <person name="Mooney P."/>
            <person name="Moule S."/>
            <person name="Mungall K.L."/>
            <person name="Murphy L.D."/>
            <person name="Niblett D."/>
            <person name="Odell C."/>
            <person name="Oliver K."/>
            <person name="O'Neil S."/>
            <person name="Pearson D."/>
            <person name="Quail M.A."/>
            <person name="Rabbinowitsch E."/>
            <person name="Rutherford K.M."/>
            <person name="Rutter S."/>
            <person name="Saunders D."/>
            <person name="Seeger K."/>
            <person name="Sharp S."/>
            <person name="Skelton J."/>
            <person name="Simmonds M.N."/>
            <person name="Squares R."/>
            <person name="Squares S."/>
            <person name="Stevens K."/>
            <person name="Taylor K."/>
            <person name="Taylor R.G."/>
            <person name="Tivey A."/>
            <person name="Walsh S.V."/>
            <person name="Warren T."/>
            <person name="Whitehead S."/>
            <person name="Woodward J.R."/>
            <person name="Volckaert G."/>
            <person name="Aert R."/>
            <person name="Robben J."/>
            <person name="Grymonprez B."/>
            <person name="Weltjens I."/>
            <person name="Vanstreels E."/>
            <person name="Rieger M."/>
            <person name="Schaefer M."/>
            <person name="Mueller-Auer S."/>
            <person name="Gabel C."/>
            <person name="Fuchs M."/>
            <person name="Duesterhoeft A."/>
            <person name="Fritzc C."/>
            <person name="Holzer E."/>
            <person name="Moestl D."/>
            <person name="Hilbert H."/>
            <person name="Borzym K."/>
            <person name="Langer I."/>
            <person name="Beck A."/>
            <person name="Lehrach H."/>
            <person name="Reinhardt R."/>
            <person name="Pohl T.M."/>
            <person name="Eger P."/>
            <person name="Zimmermann W."/>
            <person name="Wedler H."/>
            <person name="Wambutt R."/>
            <person name="Purnelle B."/>
            <person name="Goffeau A."/>
            <person name="Cadieu E."/>
            <person name="Dreano S."/>
            <person name="Gloux S."/>
            <person name="Lelaure V."/>
            <person name="Mottier S."/>
            <person name="Galibert F."/>
            <person name="Aves S.J."/>
            <person name="Xiang Z."/>
            <person name="Hunt C."/>
            <person name="Moore K."/>
            <person name="Hurst S.M."/>
            <person name="Lucas M."/>
            <person name="Rochet M."/>
            <person name="Gaillardin C."/>
            <person name="Tallada V.A."/>
            <person name="Garzon A."/>
            <person name="Thode G."/>
            <person name="Daga R.R."/>
            <person name="Cruzado L."/>
            <person name="Jimenez J."/>
            <person name="Sanchez M."/>
            <person name="del Rey F."/>
            <person name="Benito J."/>
            <person name="Dominguez A."/>
            <person name="Revuelta J.L."/>
            <person name="Moreno S."/>
            <person name="Armstrong J."/>
            <person name="Forsburg S.L."/>
            <person name="Cerutti L."/>
            <person name="Lowe T."/>
            <person name="McCombie W.R."/>
            <person name="Paulsen I."/>
            <person name="Potashkin J."/>
            <person name="Shpakovski G.V."/>
            <person name="Ussery D."/>
            <person name="Barrell B.G."/>
            <person name="Nurse P."/>
        </authorList>
    </citation>
    <scope>NUCLEOTIDE SEQUENCE [LARGE SCALE GENOMIC DNA]</scope>
    <source>
        <strain>972 / ATCC 24843</strain>
    </source>
</reference>
<reference key="2">
    <citation type="journal article" date="2006" name="Nat. Biotechnol.">
        <title>ORFeome cloning and global analysis of protein localization in the fission yeast Schizosaccharomyces pombe.</title>
        <authorList>
            <person name="Matsuyama A."/>
            <person name="Arai R."/>
            <person name="Yashiroda Y."/>
            <person name="Shirai A."/>
            <person name="Kamata A."/>
            <person name="Sekido S."/>
            <person name="Kobayashi Y."/>
            <person name="Hashimoto A."/>
            <person name="Hamamoto M."/>
            <person name="Hiraoka Y."/>
            <person name="Horinouchi S."/>
            <person name="Yoshida M."/>
        </authorList>
    </citation>
    <scope>SUBCELLULAR LOCATION [LARGE SCALE ANALYSIS]</scope>
</reference>
<comment type="function">
    <text evidence="1">Deaminates adenosine-37 to inosine in tRNA-Ala.</text>
</comment>
<comment type="catalytic activity">
    <reaction evidence="4">
        <text>adenosine(37) in tRNA(Ala) + H2O + H(+) = inosine(37) in tRNA(Ala) + NH4(+)</text>
        <dbReference type="Rhea" id="RHEA:50968"/>
        <dbReference type="Rhea" id="RHEA-COMP:12855"/>
        <dbReference type="Rhea" id="RHEA-COMP:12856"/>
        <dbReference type="ChEBI" id="CHEBI:15377"/>
        <dbReference type="ChEBI" id="CHEBI:15378"/>
        <dbReference type="ChEBI" id="CHEBI:28938"/>
        <dbReference type="ChEBI" id="CHEBI:74411"/>
        <dbReference type="ChEBI" id="CHEBI:82852"/>
        <dbReference type="EC" id="3.5.4.34"/>
    </reaction>
</comment>
<comment type="cofactor">
    <cofactor evidence="1">
        <name>1D-myo-inositol hexakisphosphate</name>
        <dbReference type="ChEBI" id="CHEBI:58130"/>
    </cofactor>
    <text evidence="1">Binds 1 myo-inositol hexakisphosphate (IP6) per subunit.</text>
</comment>
<comment type="cofactor">
    <cofactor evidence="1">
        <name>Zn(2+)</name>
        <dbReference type="ChEBI" id="CHEBI:29105"/>
    </cofactor>
</comment>
<comment type="subcellular location">
    <subcellularLocation>
        <location evidence="3">Cytoplasm</location>
    </subcellularLocation>
    <subcellularLocation>
        <location evidence="3">Nucleus</location>
    </subcellularLocation>
</comment>
<comment type="similarity">
    <text evidence="4">Belongs to the ADAT1 family.</text>
</comment>
<sequence>MEEFTLDRNSNVGNLIALAVLNKFDELARHGKPIIRANGVREWTTLAGVVIQKKMENEFICVCLATGVKCTPAGIIKNEQLGSVLHDCHAEILALRCFNRLLLEHCILIKESKKDTWLLEVADNGKFTLNSNLLIHLYVSECPCGDASMELLASRLENNKPWNLTVDSEKLMRGRADFGLLGIVRTKPGRPDAPVSWSKSCTDKLAAKQYLSILNSQTSLICEPIYLSCVVLYKKVIVKSAIDRAFGPFGRCAPLAEFGEKDNPYYFHPFTVLETDENFLYSRPLNQAEKTATSTNVLIWIGDKMQCTQVIHNGIKAGTKAKDVEKSQTLICRKSMMNLLHQLSQSLTNEKNYYEWKKLNIKRCQQKQILRNILKNWIPNGGNEFQWI</sequence>
<name>TAD1_SCHPO</name>
<organism>
    <name type="scientific">Schizosaccharomyces pombe (strain 972 / ATCC 24843)</name>
    <name type="common">Fission yeast</name>
    <dbReference type="NCBI Taxonomy" id="284812"/>
    <lineage>
        <taxon>Eukaryota</taxon>
        <taxon>Fungi</taxon>
        <taxon>Dikarya</taxon>
        <taxon>Ascomycota</taxon>
        <taxon>Taphrinomycotina</taxon>
        <taxon>Schizosaccharomycetes</taxon>
        <taxon>Schizosaccharomycetales</taxon>
        <taxon>Schizosaccharomycetaceae</taxon>
        <taxon>Schizosaccharomyces</taxon>
    </lineage>
</organism>
<feature type="chain" id="PRO_0000316215" description="tRNA-specific adenosine deaminase 1">
    <location>
        <begin position="1"/>
        <end position="388"/>
    </location>
</feature>
<feature type="domain" description="A to I editase" evidence="2">
    <location>
        <begin position="63"/>
        <end position="388"/>
    </location>
</feature>
<feature type="active site" description="Proton donor" evidence="2">
    <location>
        <position position="91"/>
    </location>
</feature>
<feature type="binding site" evidence="2">
    <location>
        <position position="89"/>
    </location>
    <ligand>
        <name>Zn(2+)</name>
        <dbReference type="ChEBI" id="CHEBI:29105"/>
    </ligand>
</feature>
<feature type="binding site" evidence="1">
    <location>
        <position position="96"/>
    </location>
    <ligand>
        <name>1D-myo-inositol hexakisphosphate</name>
        <dbReference type="ChEBI" id="CHEBI:58130"/>
    </ligand>
</feature>
<feature type="binding site" evidence="2">
    <location>
        <position position="144"/>
    </location>
    <ligand>
        <name>Zn(2+)</name>
        <dbReference type="ChEBI" id="CHEBI:29105"/>
    </ligand>
</feature>
<feature type="binding site" evidence="2">
    <location>
        <position position="201"/>
    </location>
    <ligand>
        <name>Zn(2+)</name>
        <dbReference type="ChEBI" id="CHEBI:29105"/>
    </ligand>
</feature>
<feature type="binding site" evidence="1">
    <location>
        <position position="204"/>
    </location>
    <ligand>
        <name>1D-myo-inositol hexakisphosphate</name>
        <dbReference type="ChEBI" id="CHEBI:58130"/>
    </ligand>
</feature>
<feature type="binding site" evidence="1">
    <location>
        <position position="357"/>
    </location>
    <ligand>
        <name>1D-myo-inositol hexakisphosphate</name>
        <dbReference type="ChEBI" id="CHEBI:58130"/>
    </ligand>
</feature>
<feature type="binding site" evidence="1">
    <location>
        <position position="363"/>
    </location>
    <ligand>
        <name>1D-myo-inositol hexakisphosphate</name>
        <dbReference type="ChEBI" id="CHEBI:58130"/>
    </ligand>
</feature>
<dbReference type="EC" id="3.5.4.34" evidence="4"/>
<dbReference type="EMBL" id="CU329671">
    <property type="protein sequence ID" value="CAA16857.1"/>
    <property type="molecule type" value="Genomic_DNA"/>
</dbReference>
<dbReference type="PIR" id="T39546">
    <property type="entry name" value="T39546"/>
</dbReference>
<dbReference type="SMR" id="O42912"/>
<dbReference type="BioGRID" id="276577">
    <property type="interactions" value="5"/>
</dbReference>
<dbReference type="FunCoup" id="O42912">
    <property type="interactions" value="471"/>
</dbReference>
<dbReference type="STRING" id="284812.O42912"/>
<dbReference type="iPTMnet" id="O42912"/>
<dbReference type="SwissPalm" id="O42912"/>
<dbReference type="PaxDb" id="4896-SPBC16A3.06.1"/>
<dbReference type="EnsemblFungi" id="SPBC16A3.06.1">
    <property type="protein sequence ID" value="SPBC16A3.06.1:pep"/>
    <property type="gene ID" value="SPBC16A3.06"/>
</dbReference>
<dbReference type="KEGG" id="spo:2540035"/>
<dbReference type="PomBase" id="SPBC16A3.06"/>
<dbReference type="VEuPathDB" id="FungiDB:SPBC16A3.06"/>
<dbReference type="eggNOG" id="KOG2777">
    <property type="taxonomic scope" value="Eukaryota"/>
</dbReference>
<dbReference type="HOGENOM" id="CLU_005382_2_1_1"/>
<dbReference type="InParanoid" id="O42912"/>
<dbReference type="OMA" id="YVSECPC"/>
<dbReference type="PhylomeDB" id="O42912"/>
<dbReference type="PRO" id="PR:O42912"/>
<dbReference type="Proteomes" id="UP000002485">
    <property type="component" value="Chromosome II"/>
</dbReference>
<dbReference type="GO" id="GO:0005829">
    <property type="term" value="C:cytosol"/>
    <property type="evidence" value="ECO:0007005"/>
    <property type="project" value="PomBase"/>
</dbReference>
<dbReference type="GO" id="GO:0005634">
    <property type="term" value="C:nucleus"/>
    <property type="evidence" value="ECO:0007005"/>
    <property type="project" value="PomBase"/>
</dbReference>
<dbReference type="GO" id="GO:0046872">
    <property type="term" value="F:metal ion binding"/>
    <property type="evidence" value="ECO:0007669"/>
    <property type="project" value="UniProtKB-KW"/>
</dbReference>
<dbReference type="GO" id="GO:0003723">
    <property type="term" value="F:RNA binding"/>
    <property type="evidence" value="ECO:0007669"/>
    <property type="project" value="InterPro"/>
</dbReference>
<dbReference type="GO" id="GO:0043829">
    <property type="term" value="F:tRNA-specific adenosine-37 deaminase activity"/>
    <property type="evidence" value="ECO:0000318"/>
    <property type="project" value="GO_Central"/>
</dbReference>
<dbReference type="GO" id="GO:0006400">
    <property type="term" value="P:tRNA modification"/>
    <property type="evidence" value="ECO:0000318"/>
    <property type="project" value="GO_Central"/>
</dbReference>
<dbReference type="GO" id="GO:0002100">
    <property type="term" value="P:tRNA wobble adenosine to inosine editing"/>
    <property type="evidence" value="ECO:0000305"/>
    <property type="project" value="PomBase"/>
</dbReference>
<dbReference type="InterPro" id="IPR002466">
    <property type="entry name" value="A_deamin"/>
</dbReference>
<dbReference type="InterPro" id="IPR042935">
    <property type="entry name" value="Tad1"/>
</dbReference>
<dbReference type="PANTHER" id="PTHR47803">
    <property type="entry name" value="TRNA-SPECIFIC ADENOSINE DEAMINASE 1"/>
    <property type="match status" value="1"/>
</dbReference>
<dbReference type="PANTHER" id="PTHR47803:SF1">
    <property type="entry name" value="TRNA-SPECIFIC ADENOSINE DEAMINASE 1"/>
    <property type="match status" value="1"/>
</dbReference>
<dbReference type="Pfam" id="PF02137">
    <property type="entry name" value="A_deamin"/>
    <property type="match status" value="1"/>
</dbReference>
<dbReference type="SMART" id="SM00552">
    <property type="entry name" value="ADEAMc"/>
    <property type="match status" value="1"/>
</dbReference>
<dbReference type="PROSITE" id="PS50141">
    <property type="entry name" value="A_DEAMIN_EDITASE"/>
    <property type="match status" value="1"/>
</dbReference>
<protein>
    <recommendedName>
        <fullName>tRNA-specific adenosine deaminase 1</fullName>
        <ecNumber evidence="4">3.5.4.34</ecNumber>
    </recommendedName>
    <alternativeName>
        <fullName>tRNA-specific adenosine-37 deaminase</fullName>
    </alternativeName>
</protein>
<proteinExistence type="inferred from homology"/>
<gene>
    <name type="ORF">SPBC16A3.06</name>
</gene>
<evidence type="ECO:0000250" key="1"/>
<evidence type="ECO:0000255" key="2">
    <source>
        <dbReference type="PROSITE-ProRule" id="PRU00240"/>
    </source>
</evidence>
<evidence type="ECO:0000269" key="3">
    <source>
    </source>
</evidence>
<evidence type="ECO:0000305" key="4"/>